<feature type="chain" id="PRO_1000013266" description="Large ribosomal subunit protein bL34">
    <location>
        <begin position="1"/>
        <end position="44"/>
    </location>
</feature>
<organism>
    <name type="scientific">Aeromonas hydrophila subsp. hydrophila (strain ATCC 7966 / DSM 30187 / BCRC 13018 / CCUG 14551 / JCM 1027 / KCTC 2358 / NCIMB 9240 / NCTC 8049)</name>
    <dbReference type="NCBI Taxonomy" id="380703"/>
    <lineage>
        <taxon>Bacteria</taxon>
        <taxon>Pseudomonadati</taxon>
        <taxon>Pseudomonadota</taxon>
        <taxon>Gammaproteobacteria</taxon>
        <taxon>Aeromonadales</taxon>
        <taxon>Aeromonadaceae</taxon>
        <taxon>Aeromonas</taxon>
    </lineage>
</organism>
<protein>
    <recommendedName>
        <fullName evidence="1">Large ribosomal subunit protein bL34</fullName>
    </recommendedName>
    <alternativeName>
        <fullName evidence="2">50S ribosomal protein L34</fullName>
    </alternativeName>
</protein>
<sequence length="44" mass="5050">MKRTFQPSNLKRKRSHGFRARMATANGRKVLAARRAKGRARLVV</sequence>
<dbReference type="EMBL" id="CP000462">
    <property type="protein sequence ID" value="ABK38058.1"/>
    <property type="molecule type" value="Genomic_DNA"/>
</dbReference>
<dbReference type="RefSeq" id="WP_005307156.1">
    <property type="nucleotide sequence ID" value="NC_008570.1"/>
</dbReference>
<dbReference type="RefSeq" id="YP_858701.1">
    <property type="nucleotide sequence ID" value="NC_008570.1"/>
</dbReference>
<dbReference type="SMR" id="A0KR00"/>
<dbReference type="STRING" id="380703.AHA_4284"/>
<dbReference type="EnsemblBacteria" id="ABK38058">
    <property type="protein sequence ID" value="ABK38058"/>
    <property type="gene ID" value="AHA_4284"/>
</dbReference>
<dbReference type="GeneID" id="97859424"/>
<dbReference type="KEGG" id="aha:AHA_4284"/>
<dbReference type="PATRIC" id="fig|380703.7.peg.4233"/>
<dbReference type="eggNOG" id="COG0230">
    <property type="taxonomic scope" value="Bacteria"/>
</dbReference>
<dbReference type="HOGENOM" id="CLU_129938_2_0_6"/>
<dbReference type="PRO" id="PR:A0KR00"/>
<dbReference type="Proteomes" id="UP000000756">
    <property type="component" value="Chromosome"/>
</dbReference>
<dbReference type="GO" id="GO:1990904">
    <property type="term" value="C:ribonucleoprotein complex"/>
    <property type="evidence" value="ECO:0007669"/>
    <property type="project" value="UniProtKB-KW"/>
</dbReference>
<dbReference type="GO" id="GO:0005840">
    <property type="term" value="C:ribosome"/>
    <property type="evidence" value="ECO:0007669"/>
    <property type="project" value="UniProtKB-KW"/>
</dbReference>
<dbReference type="GO" id="GO:0003735">
    <property type="term" value="F:structural constituent of ribosome"/>
    <property type="evidence" value="ECO:0007669"/>
    <property type="project" value="InterPro"/>
</dbReference>
<dbReference type="GO" id="GO:0006412">
    <property type="term" value="P:translation"/>
    <property type="evidence" value="ECO:0007669"/>
    <property type="project" value="UniProtKB-UniRule"/>
</dbReference>
<dbReference type="FunFam" id="1.10.287.3980:FF:000001">
    <property type="entry name" value="Mitochondrial ribosomal protein L34"/>
    <property type="match status" value="1"/>
</dbReference>
<dbReference type="Gene3D" id="1.10.287.3980">
    <property type="match status" value="1"/>
</dbReference>
<dbReference type="HAMAP" id="MF_00391">
    <property type="entry name" value="Ribosomal_bL34"/>
    <property type="match status" value="1"/>
</dbReference>
<dbReference type="InterPro" id="IPR000271">
    <property type="entry name" value="Ribosomal_bL34"/>
</dbReference>
<dbReference type="InterPro" id="IPR020939">
    <property type="entry name" value="Ribosomal_bL34_CS"/>
</dbReference>
<dbReference type="NCBIfam" id="TIGR01030">
    <property type="entry name" value="rpmH_bact"/>
    <property type="match status" value="1"/>
</dbReference>
<dbReference type="PANTHER" id="PTHR14503:SF4">
    <property type="entry name" value="LARGE RIBOSOMAL SUBUNIT PROTEIN BL34M"/>
    <property type="match status" value="1"/>
</dbReference>
<dbReference type="PANTHER" id="PTHR14503">
    <property type="entry name" value="MITOCHONDRIAL RIBOSOMAL PROTEIN 34 FAMILY MEMBER"/>
    <property type="match status" value="1"/>
</dbReference>
<dbReference type="Pfam" id="PF00468">
    <property type="entry name" value="Ribosomal_L34"/>
    <property type="match status" value="1"/>
</dbReference>
<dbReference type="PROSITE" id="PS00784">
    <property type="entry name" value="RIBOSOMAL_L34"/>
    <property type="match status" value="1"/>
</dbReference>
<name>RL34_AERHH</name>
<proteinExistence type="inferred from homology"/>
<gene>
    <name evidence="1" type="primary">rpmH</name>
    <name type="ordered locus">AHA_4284</name>
</gene>
<reference key="1">
    <citation type="journal article" date="2006" name="J. Bacteriol.">
        <title>Genome sequence of Aeromonas hydrophila ATCC 7966T: jack of all trades.</title>
        <authorList>
            <person name="Seshadri R."/>
            <person name="Joseph S.W."/>
            <person name="Chopra A.K."/>
            <person name="Sha J."/>
            <person name="Shaw J."/>
            <person name="Graf J."/>
            <person name="Haft D.H."/>
            <person name="Wu M."/>
            <person name="Ren Q."/>
            <person name="Rosovitz M.J."/>
            <person name="Madupu R."/>
            <person name="Tallon L."/>
            <person name="Kim M."/>
            <person name="Jin S."/>
            <person name="Vuong H."/>
            <person name="Stine O.C."/>
            <person name="Ali A."/>
            <person name="Horneman A.J."/>
            <person name="Heidelberg J.F."/>
        </authorList>
    </citation>
    <scope>NUCLEOTIDE SEQUENCE [LARGE SCALE GENOMIC DNA]</scope>
    <source>
        <strain>ATCC 7966 / DSM 30187 / BCRC 13018 / CCUG 14551 / JCM 1027 / KCTC 2358 / NCIMB 9240 / NCTC 8049</strain>
    </source>
</reference>
<accession>A0KR00</accession>
<comment type="similarity">
    <text evidence="1">Belongs to the bacterial ribosomal protein bL34 family.</text>
</comment>
<evidence type="ECO:0000255" key="1">
    <source>
        <dbReference type="HAMAP-Rule" id="MF_00391"/>
    </source>
</evidence>
<evidence type="ECO:0000305" key="2"/>
<keyword id="KW-1185">Reference proteome</keyword>
<keyword id="KW-0687">Ribonucleoprotein</keyword>
<keyword id="KW-0689">Ribosomal protein</keyword>